<comment type="function">
    <text evidence="1 2">May have a role in mesendoderm development during embryogenesis.</text>
</comment>
<comment type="tissue specificity">
    <text evidence="1">Expressed in mesendodermal precursor cells of embryos.</text>
</comment>
<comment type="developmental stage">
    <text evidence="1">Tenfold increase in expression between 4-cell and 12-cell embryos.</text>
</comment>
<comment type="miscellaneous">
    <text>Down-regulated in 12-cell embryos from mutant worms lacking skn-1.</text>
</comment>
<dbReference type="EMBL" id="FO080163">
    <property type="protein sequence ID" value="CCD61711.1"/>
    <property type="molecule type" value="Genomic_DNA"/>
</dbReference>
<dbReference type="PIR" id="S27789">
    <property type="entry name" value="S27789"/>
</dbReference>
<dbReference type="RefSeq" id="NP_498919.2">
    <property type="nucleotide sequence ID" value="NM_066518.6"/>
</dbReference>
<dbReference type="SMR" id="P34259"/>
<dbReference type="FunCoup" id="P34259">
    <property type="interactions" value="1439"/>
</dbReference>
<dbReference type="STRING" id="6239.B0303.8.1"/>
<dbReference type="PaxDb" id="6239-B0303.8"/>
<dbReference type="PeptideAtlas" id="P34259"/>
<dbReference type="EnsemblMetazoa" id="B0303.8.1">
    <property type="protein sequence ID" value="B0303.8.1"/>
    <property type="gene ID" value="WBGene00015129"/>
</dbReference>
<dbReference type="GeneID" id="181916"/>
<dbReference type="KEGG" id="cel:CELE_B0303.8"/>
<dbReference type="UCSC" id="B0303.8">
    <property type="organism name" value="c. elegans"/>
</dbReference>
<dbReference type="AGR" id="WB:WBGene00015129"/>
<dbReference type="CTD" id="181916"/>
<dbReference type="WormBase" id="B0303.8">
    <property type="protein sequence ID" value="CE00001"/>
    <property type="gene ID" value="WBGene00015129"/>
    <property type="gene designation" value="sdz-1"/>
</dbReference>
<dbReference type="eggNOG" id="ENOG502R7JM">
    <property type="taxonomic scope" value="Eukaryota"/>
</dbReference>
<dbReference type="HOGENOM" id="CLU_1166781_0_0_1"/>
<dbReference type="InParanoid" id="P34259"/>
<dbReference type="OMA" id="VFCIDEY"/>
<dbReference type="OrthoDB" id="5868534at2759"/>
<dbReference type="PhylomeDB" id="P34259"/>
<dbReference type="PRO" id="PR:P34259"/>
<dbReference type="Proteomes" id="UP000001940">
    <property type="component" value="Chromosome III"/>
</dbReference>
<dbReference type="Bgee" id="WBGene00015129">
    <property type="expression patterns" value="Expressed in embryo and 1 other cell type or tissue"/>
</dbReference>
<dbReference type="GO" id="GO:0048382">
    <property type="term" value="P:mesendoderm development"/>
    <property type="evidence" value="ECO:0000315"/>
    <property type="project" value="UniProtKB"/>
</dbReference>
<dbReference type="InterPro" id="IPR053132">
    <property type="entry name" value="Mesendoderm_Regulator"/>
</dbReference>
<dbReference type="PANTHER" id="PTHR35855">
    <property type="entry name" value="PROTEIN CBG11437-RELATED"/>
    <property type="match status" value="1"/>
</dbReference>
<dbReference type="PANTHER" id="PTHR35855:SF2">
    <property type="entry name" value="SKN-1 DEPENDENT ZYGOTIC TRANSCRIPT 1 PROTEIN"/>
    <property type="match status" value="1"/>
</dbReference>
<protein>
    <recommendedName>
        <fullName>Skn-1 dependent zygotic transcript 1 protein</fullName>
    </recommendedName>
</protein>
<gene>
    <name type="primary">sdz-1</name>
    <name type="ORF">B0303.8</name>
</gene>
<proteinExistence type="evidence at transcript level"/>
<organism>
    <name type="scientific">Caenorhabditis elegans</name>
    <dbReference type="NCBI Taxonomy" id="6239"/>
    <lineage>
        <taxon>Eukaryota</taxon>
        <taxon>Metazoa</taxon>
        <taxon>Ecdysozoa</taxon>
        <taxon>Nematoda</taxon>
        <taxon>Chromadorea</taxon>
        <taxon>Rhabditida</taxon>
        <taxon>Rhabditina</taxon>
        <taxon>Rhabditomorpha</taxon>
        <taxon>Rhabditoidea</taxon>
        <taxon>Rhabditidae</taxon>
        <taxon>Peloderinae</taxon>
        <taxon>Caenorhabditis</taxon>
    </lineage>
</organism>
<reference key="1">
    <citation type="journal article" date="1992" name="Nature">
        <title>The C. elegans genome sequencing project: a beginning.</title>
        <authorList>
            <person name="Sulston J."/>
            <person name="Du Z."/>
            <person name="Thomas K."/>
            <person name="Wilson R."/>
            <person name="Hillier L."/>
            <person name="Staden R."/>
            <person name="Halloran N."/>
            <person name="Green P."/>
            <person name="Thierry-Mieg J."/>
            <person name="Qiu L."/>
            <person name="Dear S."/>
            <person name="Coulson A."/>
            <person name="Craxton M."/>
            <person name="Durbin R."/>
            <person name="Berks M."/>
            <person name="Metzstein M."/>
            <person name="Hawkins T."/>
            <person name="Ainscough R."/>
            <person name="Waterston R."/>
        </authorList>
    </citation>
    <scope>NUCLEOTIDE SEQUENCE [LARGE SCALE GENOMIC DNA]</scope>
    <source>
        <strain>Bristol N2</strain>
    </source>
</reference>
<reference key="2">
    <citation type="journal article" date="1998" name="Science">
        <title>Genome sequence of the nematode C. elegans: a platform for investigating biology.</title>
        <authorList>
            <consortium name="The C. elegans sequencing consortium"/>
        </authorList>
    </citation>
    <scope>NUCLEOTIDE SEQUENCE [LARGE SCALE GENOMIC DNA]</scope>
    <source>
        <strain>Bristol N2</strain>
    </source>
</reference>
<reference key="3">
    <citation type="journal article" date="2004" name="Dev. Biol.">
        <title>Identification of lineage-specific zygotic transcripts in early Caenorhabditis elegans embryos.</title>
        <authorList>
            <person name="Robertson S.M."/>
            <person name="Shetty P."/>
            <person name="Lin R."/>
        </authorList>
    </citation>
    <scope>FUNCTION</scope>
    <scope>TISSUE SPECIFICITY</scope>
    <scope>DEVELOPMENTAL STAGE</scope>
</reference>
<reference key="4">
    <citation type="journal article" date="2005" name="Dev. Cell">
        <title>The noncanonical binding site of the MED-1 GATA factor defines differentially regulated target genes in the C. elegans mesendoderm.</title>
        <authorList>
            <person name="Broitman-Maduro G."/>
            <person name="Maduro M.F."/>
            <person name="Rothman J.H."/>
        </authorList>
    </citation>
    <scope>FUNCTION</scope>
</reference>
<feature type="chain" id="PRO_0000065065" description="Skn-1 dependent zygotic transcript 1 protein">
    <location>
        <begin position="1"/>
        <end position="239"/>
    </location>
</feature>
<sequence length="239" mass="27341">MLRYIFFAAILFFVFPNTESAGFLKFELTADRDCLLHLEHSSTYSETVRLLAYESRPLEIYTQGSINEIPVHFQLLHHFSGKALSEAKFQIFQLKNNGLWDSKVIDTDKVILSVRSTFYCENGYFGPICDRRSRTFAPKSDIQTSTPGYQTQVLKFDFKISDDIIIYSSLAFFVLLLIIFNCILCCYRPKKSQKYLDVSLGSPKVFSICGYSADKSGNTTEYLDAPSRFFSSTKIECVV</sequence>
<keyword id="KW-0217">Developmental protein</keyword>
<keyword id="KW-1185">Reference proteome</keyword>
<name>SDZ1_CAEEL</name>
<evidence type="ECO:0000269" key="1">
    <source>
    </source>
</evidence>
<evidence type="ECO:0000269" key="2">
    <source>
    </source>
</evidence>
<accession>P34259</accession>